<sequence>MNVGVCYADADRQLWLRMEMPDDSTVEQAIRYSGILERFPEIDLSVQKVGIFGKLVKLDAPVKEGDRIEIYRPITADPKTVRRRKIASDDDDDDD</sequence>
<dbReference type="EMBL" id="AE017282">
    <property type="protein sequence ID" value="AAU91048.1"/>
    <property type="molecule type" value="Genomic_DNA"/>
</dbReference>
<dbReference type="RefSeq" id="WP_010962017.1">
    <property type="nucleotide sequence ID" value="NC_002977.6"/>
</dbReference>
<dbReference type="SMR" id="Q603I8"/>
<dbReference type="STRING" id="243233.MCA2818"/>
<dbReference type="GeneID" id="88224993"/>
<dbReference type="KEGG" id="mca:MCA2818"/>
<dbReference type="eggNOG" id="COG2914">
    <property type="taxonomic scope" value="Bacteria"/>
</dbReference>
<dbReference type="HOGENOM" id="CLU_150721_1_0_6"/>
<dbReference type="Proteomes" id="UP000006821">
    <property type="component" value="Chromosome"/>
</dbReference>
<dbReference type="Gene3D" id="3.10.20.280">
    <property type="entry name" value="RnfH-like"/>
    <property type="match status" value="1"/>
</dbReference>
<dbReference type="HAMAP" id="MF_00460">
    <property type="entry name" value="UPF0125_RnfH"/>
    <property type="match status" value="1"/>
</dbReference>
<dbReference type="InterPro" id="IPR016155">
    <property type="entry name" value="Mopterin_synth/thiamin_S_b"/>
</dbReference>
<dbReference type="InterPro" id="IPR005346">
    <property type="entry name" value="RnfH"/>
</dbReference>
<dbReference type="InterPro" id="IPR037021">
    <property type="entry name" value="RnfH_sf"/>
</dbReference>
<dbReference type="NCBIfam" id="NF002490">
    <property type="entry name" value="PRK01777.1"/>
    <property type="match status" value="1"/>
</dbReference>
<dbReference type="PANTHER" id="PTHR37483">
    <property type="entry name" value="UPF0125 PROTEIN RATB"/>
    <property type="match status" value="1"/>
</dbReference>
<dbReference type="PANTHER" id="PTHR37483:SF1">
    <property type="entry name" value="UPF0125 PROTEIN RATB"/>
    <property type="match status" value="1"/>
</dbReference>
<dbReference type="Pfam" id="PF03658">
    <property type="entry name" value="Ub-RnfH"/>
    <property type="match status" value="1"/>
</dbReference>
<dbReference type="SUPFAM" id="SSF54285">
    <property type="entry name" value="MoaD/ThiS"/>
    <property type="match status" value="1"/>
</dbReference>
<name>RNFH_METCA</name>
<protein>
    <recommendedName>
        <fullName evidence="1">Protein RnfH</fullName>
    </recommendedName>
</protein>
<accession>Q603I8</accession>
<gene>
    <name evidence="1" type="primary">rnfH</name>
    <name type="ordered locus">MCA2818</name>
</gene>
<evidence type="ECO:0000255" key="1">
    <source>
        <dbReference type="HAMAP-Rule" id="MF_00460"/>
    </source>
</evidence>
<feature type="chain" id="PRO_1000013581" description="Protein RnfH">
    <location>
        <begin position="1"/>
        <end position="95"/>
    </location>
</feature>
<comment type="similarity">
    <text evidence="1">Belongs to the UPF0125 (RnfH) family.</text>
</comment>
<keyword id="KW-1185">Reference proteome</keyword>
<proteinExistence type="inferred from homology"/>
<reference key="1">
    <citation type="journal article" date="2004" name="PLoS Biol.">
        <title>Genomic insights into methanotrophy: the complete genome sequence of Methylococcus capsulatus (Bath).</title>
        <authorList>
            <person name="Ward N.L."/>
            <person name="Larsen O."/>
            <person name="Sakwa J."/>
            <person name="Bruseth L."/>
            <person name="Khouri H.M."/>
            <person name="Durkin A.S."/>
            <person name="Dimitrov G."/>
            <person name="Jiang L."/>
            <person name="Scanlan D."/>
            <person name="Kang K.H."/>
            <person name="Lewis M.R."/>
            <person name="Nelson K.E."/>
            <person name="Methe B.A."/>
            <person name="Wu M."/>
            <person name="Heidelberg J.F."/>
            <person name="Paulsen I.T."/>
            <person name="Fouts D.E."/>
            <person name="Ravel J."/>
            <person name="Tettelin H."/>
            <person name="Ren Q."/>
            <person name="Read T.D."/>
            <person name="DeBoy R.T."/>
            <person name="Seshadri R."/>
            <person name="Salzberg S.L."/>
            <person name="Jensen H.B."/>
            <person name="Birkeland N.K."/>
            <person name="Nelson W.C."/>
            <person name="Dodson R.J."/>
            <person name="Grindhaug S.H."/>
            <person name="Holt I.E."/>
            <person name="Eidhammer I."/>
            <person name="Jonasen I."/>
            <person name="Vanaken S."/>
            <person name="Utterback T.R."/>
            <person name="Feldblyum T.V."/>
            <person name="Fraser C.M."/>
            <person name="Lillehaug J.R."/>
            <person name="Eisen J.A."/>
        </authorList>
    </citation>
    <scope>NUCLEOTIDE SEQUENCE [LARGE SCALE GENOMIC DNA]</scope>
    <source>
        <strain>ATCC 33009 / NCIMB 11132 / Bath</strain>
    </source>
</reference>
<organism>
    <name type="scientific">Methylococcus capsulatus (strain ATCC 33009 / NCIMB 11132 / Bath)</name>
    <dbReference type="NCBI Taxonomy" id="243233"/>
    <lineage>
        <taxon>Bacteria</taxon>
        <taxon>Pseudomonadati</taxon>
        <taxon>Pseudomonadota</taxon>
        <taxon>Gammaproteobacteria</taxon>
        <taxon>Methylococcales</taxon>
        <taxon>Methylococcaceae</taxon>
        <taxon>Methylococcus</taxon>
    </lineage>
</organism>